<accession>Q09024</accession>
<accession>Q6NLN1</accession>
<accession>Q7KV52</accession>
<accession>Q95SU7</accession>
<accession>Q9VZF7</accession>
<proteinExistence type="evidence at protein level"/>
<organism>
    <name type="scientific">Drosophila melanogaster</name>
    <name type="common">Fruit fly</name>
    <dbReference type="NCBI Taxonomy" id="7227"/>
    <lineage>
        <taxon>Eukaryota</taxon>
        <taxon>Metazoa</taxon>
        <taxon>Ecdysozoa</taxon>
        <taxon>Arthropoda</taxon>
        <taxon>Hexapoda</taxon>
        <taxon>Insecta</taxon>
        <taxon>Pterygota</taxon>
        <taxon>Neoptera</taxon>
        <taxon>Endopterygota</taxon>
        <taxon>Diptera</taxon>
        <taxon>Brachycera</taxon>
        <taxon>Muscomorpha</taxon>
        <taxon>Ephydroidea</taxon>
        <taxon>Drosophilidae</taxon>
        <taxon>Drosophila</taxon>
        <taxon>Sophophora</taxon>
    </lineage>
</organism>
<feature type="signal peptide" evidence="1">
    <location>
        <begin position="1"/>
        <end position="25"/>
    </location>
</feature>
<feature type="chain" id="PRO_0000014809" description="Neural/ectodermal development factor IMP-L2">
    <location>
        <begin position="26"/>
        <end position="267"/>
    </location>
</feature>
<feature type="domain" description="Ig-like C2-type 1">
    <location>
        <begin position="48"/>
        <end position="149"/>
    </location>
</feature>
<feature type="domain" description="Ig-like C2-type 2">
    <location>
        <begin position="174"/>
        <end position="260"/>
    </location>
</feature>
<feature type="disulfide bond" evidence="2">
    <location>
        <begin position="80"/>
        <end position="139"/>
    </location>
</feature>
<feature type="disulfide bond" evidence="2">
    <location>
        <begin position="195"/>
        <end position="244"/>
    </location>
</feature>
<feature type="splice variant" id="VSP_010779" description="In isoform B." evidence="3">
    <location>
        <begin position="1"/>
        <end position="4"/>
    </location>
</feature>
<feature type="splice variant" id="VSP_010780" description="In isoform A." evidence="4">
    <original>MEA</original>
    <variation>MQ</variation>
    <location>
        <begin position="1"/>
        <end position="3"/>
    </location>
</feature>
<feature type="sequence conflict" description="In Ref. 1; AAB59251." evidence="5" ref="1">
    <original>I</original>
    <variation>V</variation>
    <location>
        <position position="177"/>
    </location>
</feature>
<feature type="helix" evidence="6">
    <location>
        <begin position="51"/>
        <end position="53"/>
    </location>
</feature>
<feature type="strand" evidence="6">
    <location>
        <begin position="58"/>
        <end position="62"/>
    </location>
</feature>
<feature type="strand" evidence="6">
    <location>
        <begin position="66"/>
        <end position="69"/>
    </location>
</feature>
<feature type="strand" evidence="6">
    <location>
        <begin position="76"/>
        <end position="86"/>
    </location>
</feature>
<feature type="strand" evidence="6">
    <location>
        <begin position="89"/>
        <end position="95"/>
    </location>
</feature>
<feature type="helix" evidence="7">
    <location>
        <begin position="99"/>
        <end position="101"/>
    </location>
</feature>
<feature type="strand" evidence="6">
    <location>
        <begin position="118"/>
        <end position="127"/>
    </location>
</feature>
<feature type="strand" evidence="6">
    <location>
        <begin position="135"/>
        <end position="143"/>
    </location>
</feature>
<feature type="strand" evidence="6">
    <location>
        <begin position="146"/>
        <end position="155"/>
    </location>
</feature>
<feature type="strand" evidence="6">
    <location>
        <begin position="172"/>
        <end position="185"/>
    </location>
</feature>
<feature type="strand" evidence="6">
    <location>
        <begin position="191"/>
        <end position="193"/>
    </location>
</feature>
<feature type="strand" evidence="6">
    <location>
        <begin position="195"/>
        <end position="201"/>
    </location>
</feature>
<feature type="strand" evidence="6">
    <location>
        <begin position="204"/>
        <end position="208"/>
    </location>
</feature>
<feature type="strand" evidence="6">
    <location>
        <begin position="219"/>
        <end position="223"/>
    </location>
</feature>
<feature type="strand" evidence="6">
    <location>
        <begin position="229"/>
        <end position="231"/>
    </location>
</feature>
<feature type="helix" evidence="6">
    <location>
        <begin position="236"/>
        <end position="238"/>
    </location>
</feature>
<feature type="strand" evidence="6">
    <location>
        <begin position="240"/>
        <end position="247"/>
    </location>
</feature>
<feature type="strand" evidence="6">
    <location>
        <begin position="252"/>
        <end position="262"/>
    </location>
</feature>
<sequence>MEAKMNLHVCALALLLFGSIATVRGRAVDLVDDSNDVDNSIEAEEEKPRNRAFEADWLKFTKTPPTKLQQADGATIEIVCEMMGSQVPSIQWVVGHLPRSELDDLDSNQVAEEAPSAIVRVRSSHIIDHVLSEARTYTCVGRTGSKTIYASTVVHPPRSSRLTPEKTYPGAQKPRIIYTEKTHLDLMGSNIQLPCRVHARPRAEITWLNNENKEIVQGHRHRVLANGDLLISEIKWEDMGNYKCIARNVVGKDTADTFVYPVLNEED</sequence>
<dbReference type="EMBL" id="L23066">
    <property type="protein sequence ID" value="AAB59251.1"/>
    <property type="molecule type" value="Genomic_DNA"/>
</dbReference>
<dbReference type="EMBL" id="AE014296">
    <property type="protein sequence ID" value="AAF47866.4"/>
    <property type="molecule type" value="Genomic_DNA"/>
</dbReference>
<dbReference type="EMBL" id="AE014296">
    <property type="protein sequence ID" value="AAN11593.1"/>
    <property type="molecule type" value="Genomic_DNA"/>
</dbReference>
<dbReference type="EMBL" id="AE014296">
    <property type="protein sequence ID" value="AAN11594.2"/>
    <property type="molecule type" value="Genomic_DNA"/>
</dbReference>
<dbReference type="EMBL" id="AY060476">
    <property type="protein sequence ID" value="AAL25515.1"/>
    <property type="molecule type" value="mRNA"/>
</dbReference>
<dbReference type="EMBL" id="BT012298">
    <property type="protein sequence ID" value="AAS77423.1"/>
    <property type="molecule type" value="mRNA"/>
</dbReference>
<dbReference type="EMBL" id="BT012299">
    <property type="protein sequence ID" value="AAS77424.1"/>
    <property type="molecule type" value="mRNA"/>
</dbReference>
<dbReference type="RefSeq" id="NP_001261409.1">
    <molecule id="Q09024-3"/>
    <property type="nucleotide sequence ID" value="NM_001274480.1"/>
</dbReference>
<dbReference type="RefSeq" id="NP_523921.3">
    <molecule id="Q09024-2"/>
    <property type="nucleotide sequence ID" value="NM_079197.5"/>
</dbReference>
<dbReference type="RefSeq" id="NP_728960.1">
    <molecule id="Q09024-3"/>
    <property type="nucleotide sequence ID" value="NM_168069.2"/>
</dbReference>
<dbReference type="RefSeq" id="NP_728961.2">
    <molecule id="Q09024-1"/>
    <property type="nucleotide sequence ID" value="NM_168070.2"/>
</dbReference>
<dbReference type="PDB" id="4CBP">
    <property type="method" value="X-ray"/>
    <property type="resolution" value="1.60 A"/>
    <property type="chains" value="A/B=5-267"/>
</dbReference>
<dbReference type="PDB" id="6FEY">
    <property type="method" value="X-ray"/>
    <property type="resolution" value="3.48 A"/>
    <property type="chains" value="A/B/C/D=26-267"/>
</dbReference>
<dbReference type="PDB" id="6FF3">
    <property type="method" value="X-ray"/>
    <property type="resolution" value="2.57 A"/>
    <property type="chains" value="A=26-267"/>
</dbReference>
<dbReference type="PDBsum" id="4CBP"/>
<dbReference type="PDBsum" id="6FEY"/>
<dbReference type="PDBsum" id="6FF3"/>
<dbReference type="SASBDB" id="Q09024"/>
<dbReference type="SMR" id="Q09024"/>
<dbReference type="BioGRID" id="63991">
    <property type="interactions" value="18"/>
</dbReference>
<dbReference type="DIP" id="DIP-20664N"/>
<dbReference type="FunCoup" id="Q09024">
    <property type="interactions" value="48"/>
</dbReference>
<dbReference type="IntAct" id="Q09024">
    <property type="interactions" value="7"/>
</dbReference>
<dbReference type="STRING" id="7227.FBpp0073106"/>
<dbReference type="PaxDb" id="7227-FBpp0073106"/>
<dbReference type="DNASU" id="38513"/>
<dbReference type="EnsemblMetazoa" id="FBtr0073248">
    <molecule id="Q09024-2"/>
    <property type="protein sequence ID" value="FBpp0073104"/>
    <property type="gene ID" value="FBgn0001257"/>
</dbReference>
<dbReference type="EnsemblMetazoa" id="FBtr0073249">
    <molecule id="Q09024-3"/>
    <property type="protein sequence ID" value="FBpp0073105"/>
    <property type="gene ID" value="FBgn0001257"/>
</dbReference>
<dbReference type="EnsemblMetazoa" id="FBtr0073250">
    <molecule id="Q09024-1"/>
    <property type="protein sequence ID" value="FBpp0073106"/>
    <property type="gene ID" value="FBgn0001257"/>
</dbReference>
<dbReference type="EnsemblMetazoa" id="FBtr0333569">
    <molecule id="Q09024-3"/>
    <property type="protein sequence ID" value="FBpp0305746"/>
    <property type="gene ID" value="FBgn0001257"/>
</dbReference>
<dbReference type="GeneID" id="38513"/>
<dbReference type="KEGG" id="dme:Dmel_CG15009"/>
<dbReference type="AGR" id="FB:FBgn0001257"/>
<dbReference type="CTD" id="38513"/>
<dbReference type="FlyBase" id="FBgn0001257">
    <property type="gene designation" value="ImpL2"/>
</dbReference>
<dbReference type="VEuPathDB" id="VectorBase:FBgn0001257"/>
<dbReference type="eggNOG" id="KOG3510">
    <property type="taxonomic scope" value="Eukaryota"/>
</dbReference>
<dbReference type="HOGENOM" id="CLU_072416_0_0_1"/>
<dbReference type="InParanoid" id="Q09024"/>
<dbReference type="OMA" id="QTADWED"/>
<dbReference type="OrthoDB" id="6138780at2759"/>
<dbReference type="PhylomeDB" id="Q09024"/>
<dbReference type="SignaLink" id="Q09024"/>
<dbReference type="BioGRID-ORCS" id="38513">
    <property type="hits" value="0 hits in 1 CRISPR screen"/>
</dbReference>
<dbReference type="ChiTaRS" id="ImpL2">
    <property type="organism name" value="fly"/>
</dbReference>
<dbReference type="EvolutionaryTrace" id="Q09024"/>
<dbReference type="GenomeRNAi" id="38513"/>
<dbReference type="PRO" id="PR:Q09024"/>
<dbReference type="Proteomes" id="UP000000803">
    <property type="component" value="Chromosome 3L"/>
</dbReference>
<dbReference type="Bgee" id="FBgn0001257">
    <property type="expression patterns" value="Expressed in nurse follicle cell (Drosophila) in ovary and 227 other cell types or tissues"/>
</dbReference>
<dbReference type="ExpressionAtlas" id="Q09024">
    <property type="expression patterns" value="baseline and differential"/>
</dbReference>
<dbReference type="GO" id="GO:0030424">
    <property type="term" value="C:axon"/>
    <property type="evidence" value="ECO:0000318"/>
    <property type="project" value="GO_Central"/>
</dbReference>
<dbReference type="GO" id="GO:0005615">
    <property type="term" value="C:extracellular space"/>
    <property type="evidence" value="ECO:0000314"/>
    <property type="project" value="FlyBase"/>
</dbReference>
<dbReference type="GO" id="GO:0005886">
    <property type="term" value="C:plasma membrane"/>
    <property type="evidence" value="ECO:0000318"/>
    <property type="project" value="GO_Central"/>
</dbReference>
<dbReference type="GO" id="GO:0098632">
    <property type="term" value="F:cell-cell adhesion mediator activity"/>
    <property type="evidence" value="ECO:0000318"/>
    <property type="project" value="GO_Central"/>
</dbReference>
<dbReference type="GO" id="GO:0043559">
    <property type="term" value="F:insulin binding"/>
    <property type="evidence" value="ECO:0000314"/>
    <property type="project" value="FlyBase"/>
</dbReference>
<dbReference type="GO" id="GO:0007411">
    <property type="term" value="P:axon guidance"/>
    <property type="evidence" value="ECO:0000318"/>
    <property type="project" value="GO_Central"/>
</dbReference>
<dbReference type="GO" id="GO:0070593">
    <property type="term" value="P:dendrite self-avoidance"/>
    <property type="evidence" value="ECO:0000318"/>
    <property type="project" value="GO_Central"/>
</dbReference>
<dbReference type="GO" id="GO:0008340">
    <property type="term" value="P:determination of adult lifespan"/>
    <property type="evidence" value="ECO:0000315"/>
    <property type="project" value="FlyBase"/>
</dbReference>
<dbReference type="GO" id="GO:0007156">
    <property type="term" value="P:homophilic cell adhesion via plasma membrane adhesion molecules"/>
    <property type="evidence" value="ECO:0000318"/>
    <property type="project" value="GO_Central"/>
</dbReference>
<dbReference type="GO" id="GO:0046627">
    <property type="term" value="P:negative regulation of insulin receptor signaling pathway"/>
    <property type="evidence" value="ECO:0000316"/>
    <property type="project" value="FlyBase"/>
</dbReference>
<dbReference type="GO" id="GO:0010888">
    <property type="term" value="P:negative regulation of lipid storage"/>
    <property type="evidence" value="ECO:0000315"/>
    <property type="project" value="FlyBase"/>
</dbReference>
<dbReference type="GO" id="GO:0061965">
    <property type="term" value="P:positive regulation of entry into reproductive diapause"/>
    <property type="evidence" value="ECO:0000315"/>
    <property type="project" value="FlyBase"/>
</dbReference>
<dbReference type="GO" id="GO:0046628">
    <property type="term" value="P:positive regulation of insulin receptor signaling pathway"/>
    <property type="evidence" value="ECO:0000314"/>
    <property type="project" value="FlyBase"/>
</dbReference>
<dbReference type="GO" id="GO:0009625">
    <property type="term" value="P:response to insect"/>
    <property type="evidence" value="ECO:0000270"/>
    <property type="project" value="FlyBase"/>
</dbReference>
<dbReference type="GO" id="GO:0042594">
    <property type="term" value="P:response to starvation"/>
    <property type="evidence" value="ECO:0000315"/>
    <property type="project" value="FlyBase"/>
</dbReference>
<dbReference type="FunFam" id="2.60.40.10:FF:001749">
    <property type="entry name" value="Neural/ectodermal development factor IMP-L2"/>
    <property type="match status" value="1"/>
</dbReference>
<dbReference type="Gene3D" id="2.60.40.10">
    <property type="entry name" value="Immunoglobulins"/>
    <property type="match status" value="2"/>
</dbReference>
<dbReference type="InterPro" id="IPR007110">
    <property type="entry name" value="Ig-like_dom"/>
</dbReference>
<dbReference type="InterPro" id="IPR036179">
    <property type="entry name" value="Ig-like_dom_sf"/>
</dbReference>
<dbReference type="InterPro" id="IPR013783">
    <property type="entry name" value="Ig-like_fold"/>
</dbReference>
<dbReference type="InterPro" id="IPR013098">
    <property type="entry name" value="Ig_I-set"/>
</dbReference>
<dbReference type="InterPro" id="IPR003599">
    <property type="entry name" value="Ig_sub"/>
</dbReference>
<dbReference type="InterPro" id="IPR003598">
    <property type="entry name" value="Ig_sub2"/>
</dbReference>
<dbReference type="InterPro" id="IPR051170">
    <property type="entry name" value="Neural/epithelial_adhesion"/>
</dbReference>
<dbReference type="PANTHER" id="PTHR12231">
    <property type="entry name" value="CTX-RELATED TYPE I TRANSMEMBRANE PROTEIN"/>
    <property type="match status" value="1"/>
</dbReference>
<dbReference type="PANTHER" id="PTHR12231:SF253">
    <property type="entry name" value="DPR-INTERACTING PROTEIN ETA, ISOFORM B-RELATED"/>
    <property type="match status" value="1"/>
</dbReference>
<dbReference type="Pfam" id="PF07679">
    <property type="entry name" value="I-set"/>
    <property type="match status" value="1"/>
</dbReference>
<dbReference type="SMART" id="SM00409">
    <property type="entry name" value="IG"/>
    <property type="match status" value="2"/>
</dbReference>
<dbReference type="SMART" id="SM00408">
    <property type="entry name" value="IGc2"/>
    <property type="match status" value="2"/>
</dbReference>
<dbReference type="SUPFAM" id="SSF48726">
    <property type="entry name" value="Immunoglobulin"/>
    <property type="match status" value="2"/>
</dbReference>
<dbReference type="PROSITE" id="PS50835">
    <property type="entry name" value="IG_LIKE"/>
    <property type="match status" value="2"/>
</dbReference>
<gene>
    <name type="primary">ImpL2</name>
    <name type="ORF">CG15009</name>
</gene>
<comment type="function">
    <text>Essential developmental role during embryogenesis, in particular the normal development of the nervous system. May be involved in some aspect of cell adhesion.</text>
</comment>
<comment type="subcellular location">
    <subcellularLocation>
        <location>Secreted</location>
        <location>Extracellular space</location>
    </subcellularLocation>
</comment>
<comment type="alternative products">
    <event type="alternative splicing"/>
    <isoform>
        <id>Q09024-1</id>
        <name>C</name>
        <sequence type="displayed"/>
    </isoform>
    <isoform>
        <id>Q09024-2</id>
        <name>A</name>
        <sequence type="described" ref="VSP_010780"/>
    </isoform>
    <isoform>
        <id>Q09024-3</id>
        <name>B</name>
        <sequence type="described" ref="VSP_010779"/>
    </isoform>
</comment>
<comment type="tissue specificity">
    <text>Detected in several sites including the ventral neuroectoderm, the tracheal pits, the pharynx and esophagus, and specific neuronal cell bodies, where it is primarily expressed.</text>
</comment>
<comment type="developmental stage">
    <text>First expressed at the cellular blastoderm stage and continues to be expressed through subsequent development.</text>
</comment>
<comment type="induction">
    <text>By 20-hydroxyecdysone.</text>
</comment>
<evidence type="ECO:0000255" key="1"/>
<evidence type="ECO:0000255" key="2">
    <source>
        <dbReference type="PROSITE-ProRule" id="PRU00114"/>
    </source>
</evidence>
<evidence type="ECO:0000303" key="3">
    <source>
    </source>
</evidence>
<evidence type="ECO:0000303" key="4">
    <source ref="5"/>
</evidence>
<evidence type="ECO:0000305" key="5"/>
<evidence type="ECO:0007829" key="6">
    <source>
        <dbReference type="PDB" id="4CBP"/>
    </source>
</evidence>
<evidence type="ECO:0007829" key="7">
    <source>
        <dbReference type="PDB" id="6FF3"/>
    </source>
</evidence>
<reference key="1">
    <citation type="journal article" date="1993" name="Development">
        <title>IMP-L2: an essential secreted immunoglobulin family member implicated in neural and ectodermal development in Drosophila.</title>
        <authorList>
            <person name="Garbe J.C."/>
            <person name="Yang E."/>
            <person name="Fristrom J.W."/>
        </authorList>
    </citation>
    <scope>NUCLEOTIDE SEQUENCE [GENOMIC DNA] (ISOFORM B)</scope>
    <source>
        <strain>Canton-S</strain>
        <tissue>Embryo</tissue>
    </source>
</reference>
<reference key="2">
    <citation type="journal article" date="2000" name="Science">
        <title>The genome sequence of Drosophila melanogaster.</title>
        <authorList>
            <person name="Adams M.D."/>
            <person name="Celniker S.E."/>
            <person name="Holt R.A."/>
            <person name="Evans C.A."/>
            <person name="Gocayne J.D."/>
            <person name="Amanatides P.G."/>
            <person name="Scherer S.E."/>
            <person name="Li P.W."/>
            <person name="Hoskins R.A."/>
            <person name="Galle R.F."/>
            <person name="George R.A."/>
            <person name="Lewis S.E."/>
            <person name="Richards S."/>
            <person name="Ashburner M."/>
            <person name="Henderson S.N."/>
            <person name="Sutton G.G."/>
            <person name="Wortman J.R."/>
            <person name="Yandell M.D."/>
            <person name="Zhang Q."/>
            <person name="Chen L.X."/>
            <person name="Brandon R.C."/>
            <person name="Rogers Y.-H.C."/>
            <person name="Blazej R.G."/>
            <person name="Champe M."/>
            <person name="Pfeiffer B.D."/>
            <person name="Wan K.H."/>
            <person name="Doyle C."/>
            <person name="Baxter E.G."/>
            <person name="Helt G."/>
            <person name="Nelson C.R."/>
            <person name="Miklos G.L.G."/>
            <person name="Abril J.F."/>
            <person name="Agbayani A."/>
            <person name="An H.-J."/>
            <person name="Andrews-Pfannkoch C."/>
            <person name="Baldwin D."/>
            <person name="Ballew R.M."/>
            <person name="Basu A."/>
            <person name="Baxendale J."/>
            <person name="Bayraktaroglu L."/>
            <person name="Beasley E.M."/>
            <person name="Beeson K.Y."/>
            <person name="Benos P.V."/>
            <person name="Berman B.P."/>
            <person name="Bhandari D."/>
            <person name="Bolshakov S."/>
            <person name="Borkova D."/>
            <person name="Botchan M.R."/>
            <person name="Bouck J."/>
            <person name="Brokstein P."/>
            <person name="Brottier P."/>
            <person name="Burtis K.C."/>
            <person name="Busam D.A."/>
            <person name="Butler H."/>
            <person name="Cadieu E."/>
            <person name="Center A."/>
            <person name="Chandra I."/>
            <person name="Cherry J.M."/>
            <person name="Cawley S."/>
            <person name="Dahlke C."/>
            <person name="Davenport L.B."/>
            <person name="Davies P."/>
            <person name="de Pablos B."/>
            <person name="Delcher A."/>
            <person name="Deng Z."/>
            <person name="Mays A.D."/>
            <person name="Dew I."/>
            <person name="Dietz S.M."/>
            <person name="Dodson K."/>
            <person name="Doup L.E."/>
            <person name="Downes M."/>
            <person name="Dugan-Rocha S."/>
            <person name="Dunkov B.C."/>
            <person name="Dunn P."/>
            <person name="Durbin K.J."/>
            <person name="Evangelista C.C."/>
            <person name="Ferraz C."/>
            <person name="Ferriera S."/>
            <person name="Fleischmann W."/>
            <person name="Fosler C."/>
            <person name="Gabrielian A.E."/>
            <person name="Garg N.S."/>
            <person name="Gelbart W.M."/>
            <person name="Glasser K."/>
            <person name="Glodek A."/>
            <person name="Gong F."/>
            <person name="Gorrell J.H."/>
            <person name="Gu Z."/>
            <person name="Guan P."/>
            <person name="Harris M."/>
            <person name="Harris N.L."/>
            <person name="Harvey D.A."/>
            <person name="Heiman T.J."/>
            <person name="Hernandez J.R."/>
            <person name="Houck J."/>
            <person name="Hostin D."/>
            <person name="Houston K.A."/>
            <person name="Howland T.J."/>
            <person name="Wei M.-H."/>
            <person name="Ibegwam C."/>
            <person name="Jalali M."/>
            <person name="Kalush F."/>
            <person name="Karpen G.H."/>
            <person name="Ke Z."/>
            <person name="Kennison J.A."/>
            <person name="Ketchum K.A."/>
            <person name="Kimmel B.E."/>
            <person name="Kodira C.D."/>
            <person name="Kraft C.L."/>
            <person name="Kravitz S."/>
            <person name="Kulp D."/>
            <person name="Lai Z."/>
            <person name="Lasko P."/>
            <person name="Lei Y."/>
            <person name="Levitsky A.A."/>
            <person name="Li J.H."/>
            <person name="Li Z."/>
            <person name="Liang Y."/>
            <person name="Lin X."/>
            <person name="Liu X."/>
            <person name="Mattei B."/>
            <person name="McIntosh T.C."/>
            <person name="McLeod M.P."/>
            <person name="McPherson D."/>
            <person name="Merkulov G."/>
            <person name="Milshina N.V."/>
            <person name="Mobarry C."/>
            <person name="Morris J."/>
            <person name="Moshrefi A."/>
            <person name="Mount S.M."/>
            <person name="Moy M."/>
            <person name="Murphy B."/>
            <person name="Murphy L."/>
            <person name="Muzny D.M."/>
            <person name="Nelson D.L."/>
            <person name="Nelson D.R."/>
            <person name="Nelson K.A."/>
            <person name="Nixon K."/>
            <person name="Nusskern D.R."/>
            <person name="Pacleb J.M."/>
            <person name="Palazzolo M."/>
            <person name="Pittman G.S."/>
            <person name="Pan S."/>
            <person name="Pollard J."/>
            <person name="Puri V."/>
            <person name="Reese M.G."/>
            <person name="Reinert K."/>
            <person name="Remington K."/>
            <person name="Saunders R.D.C."/>
            <person name="Scheeler F."/>
            <person name="Shen H."/>
            <person name="Shue B.C."/>
            <person name="Siden-Kiamos I."/>
            <person name="Simpson M."/>
            <person name="Skupski M.P."/>
            <person name="Smith T.J."/>
            <person name="Spier E."/>
            <person name="Spradling A.C."/>
            <person name="Stapleton M."/>
            <person name="Strong R."/>
            <person name="Sun E."/>
            <person name="Svirskas R."/>
            <person name="Tector C."/>
            <person name="Turner R."/>
            <person name="Venter E."/>
            <person name="Wang A.H."/>
            <person name="Wang X."/>
            <person name="Wang Z.-Y."/>
            <person name="Wassarman D.A."/>
            <person name="Weinstock G.M."/>
            <person name="Weissenbach J."/>
            <person name="Williams S.M."/>
            <person name="Woodage T."/>
            <person name="Worley K.C."/>
            <person name="Wu D."/>
            <person name="Yang S."/>
            <person name="Yao Q.A."/>
            <person name="Ye J."/>
            <person name="Yeh R.-F."/>
            <person name="Zaveri J.S."/>
            <person name="Zhan M."/>
            <person name="Zhang G."/>
            <person name="Zhao Q."/>
            <person name="Zheng L."/>
            <person name="Zheng X.H."/>
            <person name="Zhong F.N."/>
            <person name="Zhong W."/>
            <person name="Zhou X."/>
            <person name="Zhu S.C."/>
            <person name="Zhu X."/>
            <person name="Smith H.O."/>
            <person name="Gibbs R.A."/>
            <person name="Myers E.W."/>
            <person name="Rubin G.M."/>
            <person name="Venter J.C."/>
        </authorList>
    </citation>
    <scope>NUCLEOTIDE SEQUENCE [LARGE SCALE GENOMIC DNA]</scope>
    <source>
        <strain>Berkeley</strain>
    </source>
</reference>
<reference key="3">
    <citation type="journal article" date="2002" name="Genome Biol.">
        <title>Annotation of the Drosophila melanogaster euchromatic genome: a systematic review.</title>
        <authorList>
            <person name="Misra S."/>
            <person name="Crosby M.A."/>
            <person name="Mungall C.J."/>
            <person name="Matthews B.B."/>
            <person name="Campbell K.S."/>
            <person name="Hradecky P."/>
            <person name="Huang Y."/>
            <person name="Kaminker J.S."/>
            <person name="Millburn G.H."/>
            <person name="Prochnik S.E."/>
            <person name="Smith C.D."/>
            <person name="Tupy J.L."/>
            <person name="Whitfield E.J."/>
            <person name="Bayraktaroglu L."/>
            <person name="Berman B.P."/>
            <person name="Bettencourt B.R."/>
            <person name="Celniker S.E."/>
            <person name="de Grey A.D.N.J."/>
            <person name="Drysdale R.A."/>
            <person name="Harris N.L."/>
            <person name="Richter J."/>
            <person name="Russo S."/>
            <person name="Schroeder A.J."/>
            <person name="Shu S.Q."/>
            <person name="Stapleton M."/>
            <person name="Yamada C."/>
            <person name="Ashburner M."/>
            <person name="Gelbart W.M."/>
            <person name="Rubin G.M."/>
            <person name="Lewis S.E."/>
        </authorList>
    </citation>
    <scope>GENOME REANNOTATION</scope>
    <scope>ALTERNATIVE SPLICING</scope>
    <source>
        <strain>Berkeley</strain>
    </source>
</reference>
<reference key="4">
    <citation type="journal article" date="2002" name="Genome Biol.">
        <title>A Drosophila full-length cDNA resource.</title>
        <authorList>
            <person name="Stapleton M."/>
            <person name="Carlson J.W."/>
            <person name="Brokstein P."/>
            <person name="Yu C."/>
            <person name="Champe M."/>
            <person name="George R.A."/>
            <person name="Guarin H."/>
            <person name="Kronmiller B."/>
            <person name="Pacleb J.M."/>
            <person name="Park S."/>
            <person name="Wan K.H."/>
            <person name="Rubin G.M."/>
            <person name="Celniker S.E."/>
        </authorList>
    </citation>
    <scope>NUCLEOTIDE SEQUENCE [LARGE SCALE MRNA] (ISOFORM B)</scope>
    <source>
        <strain>Berkeley</strain>
        <tissue>Embryo</tissue>
    </source>
</reference>
<reference key="5">
    <citation type="submission" date="2004-03" db="EMBL/GenBank/DDBJ databases">
        <authorList>
            <person name="Stapleton M."/>
            <person name="Carlson J.W."/>
            <person name="Chavez C."/>
            <person name="Frise E."/>
            <person name="George R.A."/>
            <person name="Pacleb J.M."/>
            <person name="Park S."/>
            <person name="Wan K.H."/>
            <person name="Yu C."/>
            <person name="Rubin G.M."/>
            <person name="Celniker S.E."/>
        </authorList>
    </citation>
    <scope>NUCLEOTIDE SEQUENCE [LARGE SCALE MRNA] (ISOFORMS A AND C)</scope>
    <source>
        <strain>Berkeley</strain>
        <tissue>Embryo</tissue>
    </source>
</reference>
<keyword id="KW-0002">3D-structure</keyword>
<keyword id="KW-0025">Alternative splicing</keyword>
<keyword id="KW-0130">Cell adhesion</keyword>
<keyword id="KW-0217">Developmental protein</keyword>
<keyword id="KW-1015">Disulfide bond</keyword>
<keyword id="KW-0393">Immunoglobulin domain</keyword>
<keyword id="KW-1185">Reference proteome</keyword>
<keyword id="KW-0677">Repeat</keyword>
<keyword id="KW-0964">Secreted</keyword>
<keyword id="KW-0732">Signal</keyword>
<protein>
    <recommendedName>
        <fullName>Neural/ectodermal development factor IMP-L2</fullName>
    </recommendedName>
</protein>
<name>IMPL2_DROME</name>